<evidence type="ECO:0000255" key="1">
    <source>
        <dbReference type="HAMAP-Rule" id="MF_00270"/>
    </source>
</evidence>
<evidence type="ECO:0000305" key="2"/>
<reference key="1">
    <citation type="journal article" date="1999" name="Proc. Natl. Acad. Sci. U.S.A.">
        <title>The complete chloroplast DNA sequence of the green alga Nephroselmis olivacea: insights into the architecture of ancestral chloroplast genomes.</title>
        <authorList>
            <person name="Turmel M."/>
            <person name="Otis C."/>
            <person name="Lemieux C."/>
        </authorList>
    </citation>
    <scope>NUCLEOTIDE SEQUENCE [LARGE SCALE GENOMIC DNA]</scope>
    <source>
        <strain>NIES-484 / S-N-5-8</strain>
    </source>
</reference>
<protein>
    <recommendedName>
        <fullName evidence="1">Small ribosomal subunit protein bS18c</fullName>
    </recommendedName>
    <alternativeName>
        <fullName evidence="2">30S ribosomal protein S18, chloroplastic</fullName>
    </alternativeName>
</protein>
<keyword id="KW-0150">Chloroplast</keyword>
<keyword id="KW-0934">Plastid</keyword>
<keyword id="KW-0687">Ribonucleoprotein</keyword>
<keyword id="KW-0689">Ribosomal protein</keyword>
<keyword id="KW-0694">RNA-binding</keyword>
<keyword id="KW-0699">rRNA-binding</keyword>
<comment type="subunit">
    <text>Part of the 30S ribosomal subunit.</text>
</comment>
<comment type="subcellular location">
    <subcellularLocation>
        <location>Plastid</location>
        <location>Chloroplast</location>
    </subcellularLocation>
</comment>
<comment type="similarity">
    <text evidence="1">Belongs to the bacterial ribosomal protein bS18 family.</text>
</comment>
<geneLocation type="chloroplast"/>
<dbReference type="EMBL" id="AF137379">
    <property type="protein sequence ID" value="AAD54838.1"/>
    <property type="molecule type" value="Genomic_DNA"/>
</dbReference>
<dbReference type="RefSeq" id="NP_050867.1">
    <property type="nucleotide sequence ID" value="NC_000927.1"/>
</dbReference>
<dbReference type="SMR" id="Q9TKX8"/>
<dbReference type="GeneID" id="802055"/>
<dbReference type="GO" id="GO:0009507">
    <property type="term" value="C:chloroplast"/>
    <property type="evidence" value="ECO:0007669"/>
    <property type="project" value="UniProtKB-SubCell"/>
</dbReference>
<dbReference type="GO" id="GO:0005763">
    <property type="term" value="C:mitochondrial small ribosomal subunit"/>
    <property type="evidence" value="ECO:0007669"/>
    <property type="project" value="TreeGrafter"/>
</dbReference>
<dbReference type="GO" id="GO:0070181">
    <property type="term" value="F:small ribosomal subunit rRNA binding"/>
    <property type="evidence" value="ECO:0007669"/>
    <property type="project" value="TreeGrafter"/>
</dbReference>
<dbReference type="GO" id="GO:0003735">
    <property type="term" value="F:structural constituent of ribosome"/>
    <property type="evidence" value="ECO:0007669"/>
    <property type="project" value="InterPro"/>
</dbReference>
<dbReference type="GO" id="GO:0006412">
    <property type="term" value="P:translation"/>
    <property type="evidence" value="ECO:0007669"/>
    <property type="project" value="UniProtKB-UniRule"/>
</dbReference>
<dbReference type="Gene3D" id="4.10.640.10">
    <property type="entry name" value="Ribosomal protein S18"/>
    <property type="match status" value="1"/>
</dbReference>
<dbReference type="HAMAP" id="MF_00270">
    <property type="entry name" value="Ribosomal_bS18"/>
    <property type="match status" value="1"/>
</dbReference>
<dbReference type="InterPro" id="IPR001648">
    <property type="entry name" value="Ribosomal_bS18"/>
</dbReference>
<dbReference type="InterPro" id="IPR018275">
    <property type="entry name" value="Ribosomal_bS18_CS"/>
</dbReference>
<dbReference type="InterPro" id="IPR036870">
    <property type="entry name" value="Ribosomal_bS18_sf"/>
</dbReference>
<dbReference type="NCBIfam" id="TIGR00165">
    <property type="entry name" value="S18"/>
    <property type="match status" value="1"/>
</dbReference>
<dbReference type="PANTHER" id="PTHR13479">
    <property type="entry name" value="30S RIBOSOMAL PROTEIN S18"/>
    <property type="match status" value="1"/>
</dbReference>
<dbReference type="PANTHER" id="PTHR13479:SF40">
    <property type="entry name" value="SMALL RIBOSOMAL SUBUNIT PROTEIN BS18M"/>
    <property type="match status" value="1"/>
</dbReference>
<dbReference type="Pfam" id="PF01084">
    <property type="entry name" value="Ribosomal_S18"/>
    <property type="match status" value="1"/>
</dbReference>
<dbReference type="PRINTS" id="PR00974">
    <property type="entry name" value="RIBOSOMALS18"/>
</dbReference>
<dbReference type="SUPFAM" id="SSF46911">
    <property type="entry name" value="Ribosomal protein S18"/>
    <property type="match status" value="1"/>
</dbReference>
<dbReference type="PROSITE" id="PS00057">
    <property type="entry name" value="RIBOSOMAL_S18"/>
    <property type="match status" value="1"/>
</dbReference>
<gene>
    <name evidence="1" type="primary">rps18</name>
</gene>
<proteinExistence type="inferred from homology"/>
<organism>
    <name type="scientific">Nephroselmis olivacea</name>
    <name type="common">Green alga</name>
    <dbReference type="NCBI Taxonomy" id="31312"/>
    <lineage>
        <taxon>Eukaryota</taxon>
        <taxon>Viridiplantae</taxon>
        <taxon>Chlorophyta</taxon>
        <taxon>Nephroselmidophyceae</taxon>
        <taxon>Nephroselmidales</taxon>
        <taxon>Nephroselmidaceae</taxon>
        <taxon>Nephroselmis</taxon>
    </lineage>
</organism>
<name>RR18_NEPOL</name>
<feature type="chain" id="PRO_0000111295" description="Small ribosomal subunit protein bS18c">
    <location>
        <begin position="1"/>
        <end position="73"/>
    </location>
</feature>
<sequence length="73" mass="8623">MIKFSRRRLAKLANAQIDDRIDYKNVDLLRQFLTEEGKILPRRVTGLTAKQQRGMTRAIKQARIMALLEFIHR</sequence>
<accession>Q9TKX8</accession>